<gene>
    <name evidence="1" type="primary">atpC</name>
    <name type="ordered locus">MAE_00930</name>
</gene>
<accession>B0JFM8</accession>
<sequence length="138" mass="15178">MSITVRVITPDRIVWDNVAEEVILPSSTGQLGILSGHAPLLTALNIGVMRIRPGKDWENIAVLGGFAEVENNEIKVLVNGAELGSKIDKEKARAEYERAQTRLDEVSKGDDRRKTIQAQQSWRKARARYQAAGGLVSV</sequence>
<reference key="1">
    <citation type="journal article" date="2007" name="DNA Res.">
        <title>Complete genomic structure of the bloom-forming toxic cyanobacterium Microcystis aeruginosa NIES-843.</title>
        <authorList>
            <person name="Kaneko T."/>
            <person name="Nakajima N."/>
            <person name="Okamoto S."/>
            <person name="Suzuki I."/>
            <person name="Tanabe Y."/>
            <person name="Tamaoki M."/>
            <person name="Nakamura Y."/>
            <person name="Kasai F."/>
            <person name="Watanabe A."/>
            <person name="Kawashima K."/>
            <person name="Kishida Y."/>
            <person name="Ono A."/>
            <person name="Shimizu Y."/>
            <person name="Takahashi C."/>
            <person name="Minami C."/>
            <person name="Fujishiro T."/>
            <person name="Kohara M."/>
            <person name="Katoh M."/>
            <person name="Nakazaki N."/>
            <person name="Nakayama S."/>
            <person name="Yamada M."/>
            <person name="Tabata S."/>
            <person name="Watanabe M.M."/>
        </authorList>
    </citation>
    <scope>NUCLEOTIDE SEQUENCE [LARGE SCALE GENOMIC DNA]</scope>
    <source>
        <strain>NIES-843 / IAM M-247</strain>
    </source>
</reference>
<name>ATPE_MICAN</name>
<comment type="function">
    <text evidence="1">Produces ATP from ADP in the presence of a proton gradient across the membrane.</text>
</comment>
<comment type="subunit">
    <text evidence="1">F-type ATPases have 2 components, CF(1) - the catalytic core - and CF(0) - the membrane proton channel. CF(1) has five subunits: alpha(3), beta(3), gamma(1), delta(1), epsilon(1). CF(0) has three main subunits: a, b and c.</text>
</comment>
<comment type="subcellular location">
    <subcellularLocation>
        <location evidence="1">Cellular thylakoid membrane</location>
        <topology evidence="1">Peripheral membrane protein</topology>
    </subcellularLocation>
</comment>
<comment type="similarity">
    <text evidence="1">Belongs to the ATPase epsilon chain family.</text>
</comment>
<dbReference type="EMBL" id="AP009552">
    <property type="protein sequence ID" value="BAF99914.1"/>
    <property type="molecule type" value="Genomic_DNA"/>
</dbReference>
<dbReference type="RefSeq" id="WP_002735380.1">
    <property type="nucleotide sequence ID" value="NC_010296.1"/>
</dbReference>
<dbReference type="SMR" id="B0JFM8"/>
<dbReference type="STRING" id="449447.MAE_00930"/>
<dbReference type="PaxDb" id="449447-MAE_00930"/>
<dbReference type="EnsemblBacteria" id="BAF99914">
    <property type="protein sequence ID" value="BAF99914"/>
    <property type="gene ID" value="MAE_00930"/>
</dbReference>
<dbReference type="KEGG" id="mar:MAE_00930"/>
<dbReference type="eggNOG" id="COG0355">
    <property type="taxonomic scope" value="Bacteria"/>
</dbReference>
<dbReference type="HOGENOM" id="CLU_084338_1_2_3"/>
<dbReference type="BioCyc" id="MAER449447:MAE_RS00395-MONOMER"/>
<dbReference type="Proteomes" id="UP000001510">
    <property type="component" value="Chromosome"/>
</dbReference>
<dbReference type="GO" id="GO:0031676">
    <property type="term" value="C:plasma membrane-derived thylakoid membrane"/>
    <property type="evidence" value="ECO:0007669"/>
    <property type="project" value="UniProtKB-SubCell"/>
</dbReference>
<dbReference type="GO" id="GO:0045259">
    <property type="term" value="C:proton-transporting ATP synthase complex"/>
    <property type="evidence" value="ECO:0007669"/>
    <property type="project" value="UniProtKB-KW"/>
</dbReference>
<dbReference type="GO" id="GO:0005524">
    <property type="term" value="F:ATP binding"/>
    <property type="evidence" value="ECO:0007669"/>
    <property type="project" value="UniProtKB-UniRule"/>
</dbReference>
<dbReference type="GO" id="GO:0046933">
    <property type="term" value="F:proton-transporting ATP synthase activity, rotational mechanism"/>
    <property type="evidence" value="ECO:0007669"/>
    <property type="project" value="UniProtKB-UniRule"/>
</dbReference>
<dbReference type="CDD" id="cd12152">
    <property type="entry name" value="F1-ATPase_delta"/>
    <property type="match status" value="1"/>
</dbReference>
<dbReference type="Gene3D" id="2.60.15.10">
    <property type="entry name" value="F0F1 ATP synthase delta/epsilon subunit, N-terminal"/>
    <property type="match status" value="1"/>
</dbReference>
<dbReference type="Gene3D" id="1.10.287.540">
    <property type="entry name" value="Helix hairpin bin"/>
    <property type="match status" value="1"/>
</dbReference>
<dbReference type="HAMAP" id="MF_00530">
    <property type="entry name" value="ATP_synth_epsil_bac"/>
    <property type="match status" value="1"/>
</dbReference>
<dbReference type="InterPro" id="IPR001469">
    <property type="entry name" value="ATP_synth_F1_dsu/esu"/>
</dbReference>
<dbReference type="InterPro" id="IPR020546">
    <property type="entry name" value="ATP_synth_F1_dsu/esu_N"/>
</dbReference>
<dbReference type="InterPro" id="IPR020547">
    <property type="entry name" value="ATP_synth_F1_esu_C"/>
</dbReference>
<dbReference type="InterPro" id="IPR036771">
    <property type="entry name" value="ATPsynth_dsu/esu_N"/>
</dbReference>
<dbReference type="NCBIfam" id="TIGR01216">
    <property type="entry name" value="ATP_synt_epsi"/>
    <property type="match status" value="1"/>
</dbReference>
<dbReference type="PANTHER" id="PTHR13822">
    <property type="entry name" value="ATP SYNTHASE DELTA/EPSILON CHAIN"/>
    <property type="match status" value="1"/>
</dbReference>
<dbReference type="PANTHER" id="PTHR13822:SF10">
    <property type="entry name" value="ATP SYNTHASE EPSILON CHAIN, CHLOROPLASTIC"/>
    <property type="match status" value="1"/>
</dbReference>
<dbReference type="Pfam" id="PF00401">
    <property type="entry name" value="ATP-synt_DE"/>
    <property type="match status" value="1"/>
</dbReference>
<dbReference type="Pfam" id="PF02823">
    <property type="entry name" value="ATP-synt_DE_N"/>
    <property type="match status" value="1"/>
</dbReference>
<dbReference type="SUPFAM" id="SSF51344">
    <property type="entry name" value="Epsilon subunit of F1F0-ATP synthase N-terminal domain"/>
    <property type="match status" value="1"/>
</dbReference>
<proteinExistence type="inferred from homology"/>
<evidence type="ECO:0000255" key="1">
    <source>
        <dbReference type="HAMAP-Rule" id="MF_00530"/>
    </source>
</evidence>
<protein>
    <recommendedName>
        <fullName evidence="1">ATP synthase epsilon chain</fullName>
    </recommendedName>
    <alternativeName>
        <fullName evidence="1">ATP synthase F1 sector epsilon subunit</fullName>
    </alternativeName>
    <alternativeName>
        <fullName evidence="1">F-ATPase epsilon subunit</fullName>
    </alternativeName>
</protein>
<feature type="chain" id="PRO_1000127869" description="ATP synthase epsilon chain">
    <location>
        <begin position="1"/>
        <end position="138"/>
    </location>
</feature>
<organism>
    <name type="scientific">Microcystis aeruginosa (strain NIES-843 / IAM M-2473)</name>
    <dbReference type="NCBI Taxonomy" id="449447"/>
    <lineage>
        <taxon>Bacteria</taxon>
        <taxon>Bacillati</taxon>
        <taxon>Cyanobacteriota</taxon>
        <taxon>Cyanophyceae</taxon>
        <taxon>Oscillatoriophycideae</taxon>
        <taxon>Chroococcales</taxon>
        <taxon>Microcystaceae</taxon>
        <taxon>Microcystis</taxon>
    </lineage>
</organism>
<keyword id="KW-0066">ATP synthesis</keyword>
<keyword id="KW-0139">CF(1)</keyword>
<keyword id="KW-0375">Hydrogen ion transport</keyword>
<keyword id="KW-0406">Ion transport</keyword>
<keyword id="KW-0472">Membrane</keyword>
<keyword id="KW-0793">Thylakoid</keyword>
<keyword id="KW-0813">Transport</keyword>